<gene>
    <name evidence="1" type="primary">rutC</name>
    <name type="ordered locus">Ctu_15910</name>
</gene>
<comment type="function">
    <text evidence="1">Involved in pyrimidine catabolism. Catalyzes the deamination of 3-aminoacrylate to malonic semialdehyde, a reaction that can also occur spontaneously. RutC may facilitate the reaction and modulate the metabolic fitness, rather than catalyzing essential functions.</text>
</comment>
<comment type="catalytic activity">
    <reaction evidence="1">
        <text>(Z)-3-aminoacrylate + H2O + H(+) = 3-oxopropanoate + NH4(+)</text>
        <dbReference type="Rhea" id="RHEA:34947"/>
        <dbReference type="ChEBI" id="CHEBI:15377"/>
        <dbReference type="ChEBI" id="CHEBI:15378"/>
        <dbReference type="ChEBI" id="CHEBI:28938"/>
        <dbReference type="ChEBI" id="CHEBI:33190"/>
        <dbReference type="ChEBI" id="CHEBI:59894"/>
    </reaction>
</comment>
<comment type="similarity">
    <text evidence="1">Belongs to the RutC family.</text>
</comment>
<sequence>MPKQVIIPPGASTPIAPFVPGTLADGVVYVSGTLPFDKANNVVYPGDPKAQTRHVLETIRHVIETAGGTMEDVTFNSIFITDWKNYAAINEIYAEFFPGDKPARFCIQCGLVKPEALVEIATVAHIGPSGGA</sequence>
<dbReference type="EC" id="3.5.-.-" evidence="1"/>
<dbReference type="EMBL" id="FN543093">
    <property type="protein sequence ID" value="CBA29793.1"/>
    <property type="molecule type" value="Genomic_DNA"/>
</dbReference>
<dbReference type="SMR" id="C9Y0S5"/>
<dbReference type="KEGG" id="ctu:CTU_15910"/>
<dbReference type="PATRIC" id="fig|693216.3.peg.1516"/>
<dbReference type="HOGENOM" id="CLU_100715_7_3_6"/>
<dbReference type="Proteomes" id="UP000002069">
    <property type="component" value="Chromosome"/>
</dbReference>
<dbReference type="GO" id="GO:0005829">
    <property type="term" value="C:cytosol"/>
    <property type="evidence" value="ECO:0007669"/>
    <property type="project" value="TreeGrafter"/>
</dbReference>
<dbReference type="GO" id="GO:0019239">
    <property type="term" value="F:deaminase activity"/>
    <property type="evidence" value="ECO:0007669"/>
    <property type="project" value="TreeGrafter"/>
</dbReference>
<dbReference type="GO" id="GO:0019740">
    <property type="term" value="P:nitrogen utilization"/>
    <property type="evidence" value="ECO:0007669"/>
    <property type="project" value="UniProtKB-UniRule"/>
</dbReference>
<dbReference type="GO" id="GO:0006212">
    <property type="term" value="P:uracil catabolic process"/>
    <property type="evidence" value="ECO:0007669"/>
    <property type="project" value="UniProtKB-UniRule"/>
</dbReference>
<dbReference type="CDD" id="cd00448">
    <property type="entry name" value="YjgF_YER057c_UK114_family"/>
    <property type="match status" value="1"/>
</dbReference>
<dbReference type="Gene3D" id="3.30.1330.40">
    <property type="entry name" value="RutC-like"/>
    <property type="match status" value="1"/>
</dbReference>
<dbReference type="HAMAP" id="MF_00831">
    <property type="entry name" value="RutC"/>
    <property type="match status" value="1"/>
</dbReference>
<dbReference type="InterPro" id="IPR019897">
    <property type="entry name" value="RidA_CS"/>
</dbReference>
<dbReference type="InterPro" id="IPR019898">
    <property type="entry name" value="RutC"/>
</dbReference>
<dbReference type="InterPro" id="IPR035959">
    <property type="entry name" value="RutC-like_sf"/>
</dbReference>
<dbReference type="InterPro" id="IPR006175">
    <property type="entry name" value="YjgF/YER057c/UK114"/>
</dbReference>
<dbReference type="NCBIfam" id="TIGR03610">
    <property type="entry name" value="RutC"/>
    <property type="match status" value="1"/>
</dbReference>
<dbReference type="PANTHER" id="PTHR11803">
    <property type="entry name" value="2-IMINOBUTANOATE/2-IMINOPROPANOATE DEAMINASE RIDA"/>
    <property type="match status" value="1"/>
</dbReference>
<dbReference type="PANTHER" id="PTHR11803:SF58">
    <property type="entry name" value="PROTEIN HMF1-RELATED"/>
    <property type="match status" value="1"/>
</dbReference>
<dbReference type="Pfam" id="PF01042">
    <property type="entry name" value="Ribonuc_L-PSP"/>
    <property type="match status" value="1"/>
</dbReference>
<dbReference type="SUPFAM" id="SSF55298">
    <property type="entry name" value="YjgF-like"/>
    <property type="match status" value="1"/>
</dbReference>
<dbReference type="PROSITE" id="PS01094">
    <property type="entry name" value="UPF0076"/>
    <property type="match status" value="1"/>
</dbReference>
<organism>
    <name type="scientific">Cronobacter turicensis (strain DSM 18703 / CCUG 55852 / LMG 23827 / z3032)</name>
    <dbReference type="NCBI Taxonomy" id="693216"/>
    <lineage>
        <taxon>Bacteria</taxon>
        <taxon>Pseudomonadati</taxon>
        <taxon>Pseudomonadota</taxon>
        <taxon>Gammaproteobacteria</taxon>
        <taxon>Enterobacterales</taxon>
        <taxon>Enterobacteriaceae</taxon>
        <taxon>Cronobacter</taxon>
    </lineage>
</organism>
<protein>
    <recommendedName>
        <fullName evidence="1">3-aminoacrylate deaminase RutC</fullName>
        <shortName evidence="1">3-AA deaminase</shortName>
        <ecNumber evidence="1">3.5.-.-</ecNumber>
    </recommendedName>
</protein>
<evidence type="ECO:0000255" key="1">
    <source>
        <dbReference type="HAMAP-Rule" id="MF_00831"/>
    </source>
</evidence>
<keyword id="KW-0378">Hydrolase</keyword>
<accession>C9Y0S5</accession>
<proteinExistence type="inferred from homology"/>
<reference key="1">
    <citation type="journal article" date="2011" name="J. Bacteriol.">
        <title>Complete genome sequence of Cronobacter turicensis LMG 23827, a food-borne pathogen causing deaths in neonates.</title>
        <authorList>
            <person name="Stephan R."/>
            <person name="Lehner A."/>
            <person name="Tischler P."/>
            <person name="Rattei T."/>
        </authorList>
    </citation>
    <scope>NUCLEOTIDE SEQUENCE [LARGE SCALE GENOMIC DNA]</scope>
    <source>
        <strain>DSM 18703 / CCUG 55852 / LMG 23827 / z3032</strain>
    </source>
</reference>
<feature type="chain" id="PRO_0000402717" description="3-aminoacrylate deaminase RutC">
    <location>
        <begin position="1"/>
        <end position="132"/>
    </location>
</feature>
<name>RUTC_CROTZ</name>